<evidence type="ECO:0000255" key="1">
    <source>
        <dbReference type="HAMAP-Rule" id="MF_01218"/>
    </source>
</evidence>
<comment type="function">
    <text evidence="1">Catalyzes the conversion of uracil and 5-phospho-alpha-D-ribose 1-diphosphate (PRPP) to UMP and diphosphate.</text>
</comment>
<comment type="catalytic activity">
    <reaction evidence="1">
        <text>UMP + diphosphate = 5-phospho-alpha-D-ribose 1-diphosphate + uracil</text>
        <dbReference type="Rhea" id="RHEA:13017"/>
        <dbReference type="ChEBI" id="CHEBI:17568"/>
        <dbReference type="ChEBI" id="CHEBI:33019"/>
        <dbReference type="ChEBI" id="CHEBI:57865"/>
        <dbReference type="ChEBI" id="CHEBI:58017"/>
        <dbReference type="EC" id="2.4.2.9"/>
    </reaction>
</comment>
<comment type="cofactor">
    <cofactor evidence="1">
        <name>Mg(2+)</name>
        <dbReference type="ChEBI" id="CHEBI:18420"/>
    </cofactor>
    <text evidence="1">Binds 1 Mg(2+) ion per subunit. The magnesium is bound as Mg-PRPP.</text>
</comment>
<comment type="activity regulation">
    <text evidence="1">Allosterically activated by GTP.</text>
</comment>
<comment type="pathway">
    <text evidence="1">Pyrimidine metabolism; UMP biosynthesis via salvage pathway; UMP from uracil: step 1/1.</text>
</comment>
<comment type="similarity">
    <text evidence="1">Belongs to the UPRTase family.</text>
</comment>
<proteinExistence type="inferred from homology"/>
<keyword id="KW-0021">Allosteric enzyme</keyword>
<keyword id="KW-0328">Glycosyltransferase</keyword>
<keyword id="KW-0342">GTP-binding</keyword>
<keyword id="KW-0460">Magnesium</keyword>
<keyword id="KW-0547">Nucleotide-binding</keyword>
<keyword id="KW-0808">Transferase</keyword>
<name>UPP_PSEF5</name>
<sequence>MPIREIRHPLIRHKLGLMRRADISTKNFRELAQEVGALLTYEATKDLPLESYEIPGWCGPVQVEKIAGKKITVVPILRAGIGMLEGVLSLIPGAKVSAVGVARNEETLQAHTYLEKLVPEIDERLAMIIDPMLATGSSMVATIDLLKKAGCRDIRAMVLVAAPEGIAAVEQAHPDVTIYTASIDQKLNEHGYIIPGLGDAGDKIFGTKQKDS</sequence>
<organism>
    <name type="scientific">Pseudomonas fluorescens (strain ATCC BAA-477 / NRRL B-23932 / Pf-5)</name>
    <dbReference type="NCBI Taxonomy" id="220664"/>
    <lineage>
        <taxon>Bacteria</taxon>
        <taxon>Pseudomonadati</taxon>
        <taxon>Pseudomonadota</taxon>
        <taxon>Gammaproteobacteria</taxon>
        <taxon>Pseudomonadales</taxon>
        <taxon>Pseudomonadaceae</taxon>
        <taxon>Pseudomonas</taxon>
    </lineage>
</organism>
<feature type="chain" id="PRO_1000053762" description="Uracil phosphoribosyltransferase">
    <location>
        <begin position="1"/>
        <end position="212"/>
    </location>
</feature>
<feature type="binding site" evidence="1">
    <location>
        <position position="78"/>
    </location>
    <ligand>
        <name>5-phospho-alpha-D-ribose 1-diphosphate</name>
        <dbReference type="ChEBI" id="CHEBI:58017"/>
    </ligand>
</feature>
<feature type="binding site" evidence="1">
    <location>
        <position position="103"/>
    </location>
    <ligand>
        <name>5-phospho-alpha-D-ribose 1-diphosphate</name>
        <dbReference type="ChEBI" id="CHEBI:58017"/>
    </ligand>
</feature>
<feature type="binding site" evidence="1">
    <location>
        <begin position="130"/>
        <end position="138"/>
    </location>
    <ligand>
        <name>5-phospho-alpha-D-ribose 1-diphosphate</name>
        <dbReference type="ChEBI" id="CHEBI:58017"/>
    </ligand>
</feature>
<feature type="binding site" evidence="1">
    <location>
        <position position="193"/>
    </location>
    <ligand>
        <name>uracil</name>
        <dbReference type="ChEBI" id="CHEBI:17568"/>
    </ligand>
</feature>
<feature type="binding site" evidence="1">
    <location>
        <begin position="198"/>
        <end position="200"/>
    </location>
    <ligand>
        <name>uracil</name>
        <dbReference type="ChEBI" id="CHEBI:17568"/>
    </ligand>
</feature>
<feature type="binding site" evidence="1">
    <location>
        <position position="199"/>
    </location>
    <ligand>
        <name>5-phospho-alpha-D-ribose 1-diphosphate</name>
        <dbReference type="ChEBI" id="CHEBI:58017"/>
    </ligand>
</feature>
<dbReference type="EC" id="2.4.2.9" evidence="1"/>
<dbReference type="EMBL" id="CP000076">
    <property type="protein sequence ID" value="AAY94361.1"/>
    <property type="molecule type" value="Genomic_DNA"/>
</dbReference>
<dbReference type="RefSeq" id="WP_011063386.1">
    <property type="nucleotide sequence ID" value="NC_004129.6"/>
</dbReference>
<dbReference type="SMR" id="Q4K6B5"/>
<dbReference type="STRING" id="220664.PFL_5139"/>
<dbReference type="GeneID" id="57478096"/>
<dbReference type="KEGG" id="pfl:PFL_5139"/>
<dbReference type="eggNOG" id="COG0035">
    <property type="taxonomic scope" value="Bacteria"/>
</dbReference>
<dbReference type="HOGENOM" id="CLU_067096_2_2_6"/>
<dbReference type="UniPathway" id="UPA00574">
    <property type="reaction ID" value="UER00636"/>
</dbReference>
<dbReference type="Proteomes" id="UP000008540">
    <property type="component" value="Chromosome"/>
</dbReference>
<dbReference type="GO" id="GO:0005525">
    <property type="term" value="F:GTP binding"/>
    <property type="evidence" value="ECO:0007669"/>
    <property type="project" value="UniProtKB-KW"/>
</dbReference>
<dbReference type="GO" id="GO:0000287">
    <property type="term" value="F:magnesium ion binding"/>
    <property type="evidence" value="ECO:0007669"/>
    <property type="project" value="UniProtKB-UniRule"/>
</dbReference>
<dbReference type="GO" id="GO:0004845">
    <property type="term" value="F:uracil phosphoribosyltransferase activity"/>
    <property type="evidence" value="ECO:0007669"/>
    <property type="project" value="UniProtKB-UniRule"/>
</dbReference>
<dbReference type="GO" id="GO:0044206">
    <property type="term" value="P:UMP salvage"/>
    <property type="evidence" value="ECO:0007669"/>
    <property type="project" value="UniProtKB-UniRule"/>
</dbReference>
<dbReference type="GO" id="GO:0006223">
    <property type="term" value="P:uracil salvage"/>
    <property type="evidence" value="ECO:0007669"/>
    <property type="project" value="InterPro"/>
</dbReference>
<dbReference type="CDD" id="cd06223">
    <property type="entry name" value="PRTases_typeI"/>
    <property type="match status" value="1"/>
</dbReference>
<dbReference type="FunFam" id="3.40.50.2020:FF:000003">
    <property type="entry name" value="Uracil phosphoribosyltransferase"/>
    <property type="match status" value="1"/>
</dbReference>
<dbReference type="Gene3D" id="3.40.50.2020">
    <property type="match status" value="1"/>
</dbReference>
<dbReference type="HAMAP" id="MF_01218_B">
    <property type="entry name" value="Upp_B"/>
    <property type="match status" value="1"/>
</dbReference>
<dbReference type="InterPro" id="IPR000836">
    <property type="entry name" value="PRibTrfase_dom"/>
</dbReference>
<dbReference type="InterPro" id="IPR029057">
    <property type="entry name" value="PRTase-like"/>
</dbReference>
<dbReference type="InterPro" id="IPR034332">
    <property type="entry name" value="Upp_B"/>
</dbReference>
<dbReference type="InterPro" id="IPR050054">
    <property type="entry name" value="UPRTase/APRTase"/>
</dbReference>
<dbReference type="InterPro" id="IPR005765">
    <property type="entry name" value="Ura_phspho_trans"/>
</dbReference>
<dbReference type="NCBIfam" id="NF001097">
    <property type="entry name" value="PRK00129.1"/>
    <property type="match status" value="1"/>
</dbReference>
<dbReference type="NCBIfam" id="TIGR01091">
    <property type="entry name" value="upp"/>
    <property type="match status" value="1"/>
</dbReference>
<dbReference type="PANTHER" id="PTHR32315">
    <property type="entry name" value="ADENINE PHOSPHORIBOSYLTRANSFERASE"/>
    <property type="match status" value="1"/>
</dbReference>
<dbReference type="PANTHER" id="PTHR32315:SF4">
    <property type="entry name" value="URACIL PHOSPHORIBOSYLTRANSFERASE, CHLOROPLASTIC"/>
    <property type="match status" value="1"/>
</dbReference>
<dbReference type="Pfam" id="PF14681">
    <property type="entry name" value="UPRTase"/>
    <property type="match status" value="1"/>
</dbReference>
<dbReference type="SUPFAM" id="SSF53271">
    <property type="entry name" value="PRTase-like"/>
    <property type="match status" value="1"/>
</dbReference>
<accession>Q4K6B5</accession>
<protein>
    <recommendedName>
        <fullName evidence="1">Uracil phosphoribosyltransferase</fullName>
        <ecNumber evidence="1">2.4.2.9</ecNumber>
    </recommendedName>
    <alternativeName>
        <fullName evidence="1">UMP pyrophosphorylase</fullName>
    </alternativeName>
    <alternativeName>
        <fullName evidence="1">UPRTase</fullName>
    </alternativeName>
</protein>
<reference key="1">
    <citation type="journal article" date="2005" name="Nat. Biotechnol.">
        <title>Complete genome sequence of the plant commensal Pseudomonas fluorescens Pf-5.</title>
        <authorList>
            <person name="Paulsen I.T."/>
            <person name="Press C.M."/>
            <person name="Ravel J."/>
            <person name="Kobayashi D.Y."/>
            <person name="Myers G.S.A."/>
            <person name="Mavrodi D.V."/>
            <person name="DeBoy R.T."/>
            <person name="Seshadri R."/>
            <person name="Ren Q."/>
            <person name="Madupu R."/>
            <person name="Dodson R.J."/>
            <person name="Durkin A.S."/>
            <person name="Brinkac L.M."/>
            <person name="Daugherty S.C."/>
            <person name="Sullivan S.A."/>
            <person name="Rosovitz M.J."/>
            <person name="Gwinn M.L."/>
            <person name="Zhou L."/>
            <person name="Schneider D.J."/>
            <person name="Cartinhour S.W."/>
            <person name="Nelson W.C."/>
            <person name="Weidman J."/>
            <person name="Watkins K."/>
            <person name="Tran K."/>
            <person name="Khouri H."/>
            <person name="Pierson E.A."/>
            <person name="Pierson L.S. III"/>
            <person name="Thomashow L.S."/>
            <person name="Loper J.E."/>
        </authorList>
    </citation>
    <scope>NUCLEOTIDE SEQUENCE [LARGE SCALE GENOMIC DNA]</scope>
    <source>
        <strain>ATCC BAA-477 / NRRL B-23932 / Pf-5</strain>
    </source>
</reference>
<gene>
    <name evidence="1" type="primary">upp</name>
    <name type="ordered locus">PFL_5139</name>
</gene>